<dbReference type="EC" id="2.7.7.27" evidence="1"/>
<dbReference type="EMBL" id="CP001127">
    <property type="protein sequence ID" value="ACF90495.1"/>
    <property type="molecule type" value="Genomic_DNA"/>
</dbReference>
<dbReference type="RefSeq" id="WP_000253995.1">
    <property type="nucleotide sequence ID" value="NC_011094.1"/>
</dbReference>
<dbReference type="SMR" id="B4TY87"/>
<dbReference type="KEGG" id="sew:SeSA_A3726"/>
<dbReference type="HOGENOM" id="CLU_029499_14_1_6"/>
<dbReference type="UniPathway" id="UPA00164"/>
<dbReference type="Proteomes" id="UP000001865">
    <property type="component" value="Chromosome"/>
</dbReference>
<dbReference type="GO" id="GO:0005524">
    <property type="term" value="F:ATP binding"/>
    <property type="evidence" value="ECO:0007669"/>
    <property type="project" value="UniProtKB-KW"/>
</dbReference>
<dbReference type="GO" id="GO:0008878">
    <property type="term" value="F:glucose-1-phosphate adenylyltransferase activity"/>
    <property type="evidence" value="ECO:0007669"/>
    <property type="project" value="UniProtKB-UniRule"/>
</dbReference>
<dbReference type="GO" id="GO:0005978">
    <property type="term" value="P:glycogen biosynthetic process"/>
    <property type="evidence" value="ECO:0007669"/>
    <property type="project" value="UniProtKB-UniRule"/>
</dbReference>
<dbReference type="CDD" id="cd02508">
    <property type="entry name" value="ADP_Glucose_PP"/>
    <property type="match status" value="1"/>
</dbReference>
<dbReference type="CDD" id="cd04651">
    <property type="entry name" value="LbH_G1P_AT_C"/>
    <property type="match status" value="1"/>
</dbReference>
<dbReference type="FunFam" id="2.160.10.10:FF:000006">
    <property type="entry name" value="Glucose-1-phosphate adenylyltransferase"/>
    <property type="match status" value="1"/>
</dbReference>
<dbReference type="FunFam" id="3.90.550.10:FF:000014">
    <property type="entry name" value="Glucose-1-phosphate adenylyltransferase"/>
    <property type="match status" value="1"/>
</dbReference>
<dbReference type="Gene3D" id="2.160.10.10">
    <property type="entry name" value="Hexapeptide repeat proteins"/>
    <property type="match status" value="1"/>
</dbReference>
<dbReference type="Gene3D" id="3.90.550.10">
    <property type="entry name" value="Spore Coat Polysaccharide Biosynthesis Protein SpsA, Chain A"/>
    <property type="match status" value="1"/>
</dbReference>
<dbReference type="HAMAP" id="MF_00624">
    <property type="entry name" value="GlgC"/>
    <property type="match status" value="1"/>
</dbReference>
<dbReference type="InterPro" id="IPR011831">
    <property type="entry name" value="ADP-Glc_PPase"/>
</dbReference>
<dbReference type="InterPro" id="IPR005836">
    <property type="entry name" value="ADP_Glu_pyroP_CS"/>
</dbReference>
<dbReference type="InterPro" id="IPR023049">
    <property type="entry name" value="GlgC_bac"/>
</dbReference>
<dbReference type="InterPro" id="IPR056818">
    <property type="entry name" value="GlmU/GlgC-like_hexapep"/>
</dbReference>
<dbReference type="InterPro" id="IPR005835">
    <property type="entry name" value="NTP_transferase_dom"/>
</dbReference>
<dbReference type="InterPro" id="IPR029044">
    <property type="entry name" value="Nucleotide-diphossugar_trans"/>
</dbReference>
<dbReference type="InterPro" id="IPR011004">
    <property type="entry name" value="Trimer_LpxA-like_sf"/>
</dbReference>
<dbReference type="NCBIfam" id="TIGR02091">
    <property type="entry name" value="glgC"/>
    <property type="match status" value="1"/>
</dbReference>
<dbReference type="NCBIfam" id="NF001947">
    <property type="entry name" value="PRK00725.1"/>
    <property type="match status" value="1"/>
</dbReference>
<dbReference type="NCBIfam" id="NF002023">
    <property type="entry name" value="PRK00844.1"/>
    <property type="match status" value="1"/>
</dbReference>
<dbReference type="PANTHER" id="PTHR43523:SF2">
    <property type="entry name" value="GLUCOSE-1-PHOSPHATE ADENYLYLTRANSFERASE"/>
    <property type="match status" value="1"/>
</dbReference>
<dbReference type="PANTHER" id="PTHR43523">
    <property type="entry name" value="GLUCOSE-1-PHOSPHATE ADENYLYLTRANSFERASE-RELATED"/>
    <property type="match status" value="1"/>
</dbReference>
<dbReference type="Pfam" id="PF24894">
    <property type="entry name" value="Hexapep_GlmU"/>
    <property type="match status" value="1"/>
</dbReference>
<dbReference type="Pfam" id="PF00483">
    <property type="entry name" value="NTP_transferase"/>
    <property type="match status" value="1"/>
</dbReference>
<dbReference type="SUPFAM" id="SSF53448">
    <property type="entry name" value="Nucleotide-diphospho-sugar transferases"/>
    <property type="match status" value="1"/>
</dbReference>
<dbReference type="SUPFAM" id="SSF51161">
    <property type="entry name" value="Trimeric LpxA-like enzymes"/>
    <property type="match status" value="1"/>
</dbReference>
<dbReference type="PROSITE" id="PS00808">
    <property type="entry name" value="ADP_GLC_PYROPHOSPH_1"/>
    <property type="match status" value="1"/>
</dbReference>
<dbReference type="PROSITE" id="PS00809">
    <property type="entry name" value="ADP_GLC_PYROPHOSPH_2"/>
    <property type="match status" value="1"/>
</dbReference>
<dbReference type="PROSITE" id="PS00810">
    <property type="entry name" value="ADP_GLC_PYROPHOSPH_3"/>
    <property type="match status" value="1"/>
</dbReference>
<gene>
    <name evidence="1" type="primary">glgC</name>
    <name type="ordered locus">SeSA_A3726</name>
</gene>
<organism>
    <name type="scientific">Salmonella schwarzengrund (strain CVM19633)</name>
    <dbReference type="NCBI Taxonomy" id="439843"/>
    <lineage>
        <taxon>Bacteria</taxon>
        <taxon>Pseudomonadati</taxon>
        <taxon>Pseudomonadota</taxon>
        <taxon>Gammaproteobacteria</taxon>
        <taxon>Enterobacterales</taxon>
        <taxon>Enterobacteriaceae</taxon>
        <taxon>Salmonella</taxon>
    </lineage>
</organism>
<keyword id="KW-0021">Allosteric enzyme</keyword>
<keyword id="KW-0067">ATP-binding</keyword>
<keyword id="KW-0119">Carbohydrate metabolism</keyword>
<keyword id="KW-0320">Glycogen biosynthesis</keyword>
<keyword id="KW-0321">Glycogen metabolism</keyword>
<keyword id="KW-0547">Nucleotide-binding</keyword>
<keyword id="KW-0548">Nucleotidyltransferase</keyword>
<keyword id="KW-0808">Transferase</keyword>
<feature type="chain" id="PRO_1000130503" description="Glucose-1-phosphate adenylyltransferase">
    <location>
        <begin position="1"/>
        <end position="431"/>
    </location>
</feature>
<feature type="binding site" evidence="1">
    <location>
        <position position="39"/>
    </location>
    <ligand>
        <name>beta-D-fructose 1,6-bisphosphate</name>
        <dbReference type="ChEBI" id="CHEBI:32966"/>
    </ligand>
</feature>
<feature type="binding site" evidence="1">
    <location>
        <position position="40"/>
    </location>
    <ligand>
        <name>AMP</name>
        <dbReference type="ChEBI" id="CHEBI:456215"/>
    </ligand>
</feature>
<feature type="binding site" evidence="1">
    <location>
        <position position="46"/>
    </location>
    <ligand>
        <name>AMP</name>
        <dbReference type="ChEBI" id="CHEBI:456215"/>
    </ligand>
</feature>
<feature type="binding site" evidence="1">
    <location>
        <position position="52"/>
    </location>
    <ligand>
        <name>AMP</name>
        <dbReference type="ChEBI" id="CHEBI:456215"/>
    </ligand>
</feature>
<feature type="binding site" evidence="1">
    <location>
        <position position="114"/>
    </location>
    <ligand>
        <name>alpha-D-glucose 1-phosphate</name>
        <dbReference type="ChEBI" id="CHEBI:58601"/>
    </ligand>
</feature>
<feature type="binding site" evidence="1">
    <location>
        <position position="130"/>
    </location>
    <ligand>
        <name>AMP</name>
        <dbReference type="ChEBI" id="CHEBI:456215"/>
    </ligand>
</feature>
<feature type="binding site" evidence="1">
    <location>
        <position position="179"/>
    </location>
    <ligand>
        <name>alpha-D-glucose 1-phosphate</name>
        <dbReference type="ChEBI" id="CHEBI:58601"/>
    </ligand>
</feature>
<feature type="binding site" evidence="1">
    <location>
        <begin position="194"/>
        <end position="195"/>
    </location>
    <ligand>
        <name>alpha-D-glucose 1-phosphate</name>
        <dbReference type="ChEBI" id="CHEBI:58601"/>
    </ligand>
</feature>
<feature type="binding site" evidence="1">
    <location>
        <position position="212"/>
    </location>
    <ligand>
        <name>alpha-D-glucose 1-phosphate</name>
        <dbReference type="ChEBI" id="CHEBI:58601"/>
    </ligand>
</feature>
<feature type="binding site" evidence="1">
    <location>
        <position position="370"/>
    </location>
    <ligand>
        <name>AMP</name>
        <dbReference type="ChEBI" id="CHEBI:456215"/>
    </ligand>
</feature>
<feature type="binding site" evidence="1">
    <location>
        <position position="386"/>
    </location>
    <ligand>
        <name>AMP</name>
        <dbReference type="ChEBI" id="CHEBI:456215"/>
    </ligand>
</feature>
<feature type="binding site" evidence="1">
    <location>
        <begin position="419"/>
        <end position="423"/>
    </location>
    <ligand>
        <name>beta-D-fructose 1,6-bisphosphate</name>
        <dbReference type="ChEBI" id="CHEBI:32966"/>
    </ligand>
</feature>
<feature type="binding site" evidence="1">
    <location>
        <begin position="429"/>
        <end position="431"/>
    </location>
    <ligand>
        <name>beta-D-fructose 1,6-bisphosphate</name>
        <dbReference type="ChEBI" id="CHEBI:32966"/>
    </ligand>
</feature>
<feature type="site" description="Could play a key role in the communication between the regulatory and the substrate sites" evidence="1">
    <location>
        <position position="74"/>
    </location>
</feature>
<feature type="site" description="Could play a key role in the communication between the regulatory and the substrate sites" evidence="1">
    <location>
        <position position="113"/>
    </location>
</feature>
<proteinExistence type="inferred from homology"/>
<name>GLGC_SALSV</name>
<protein>
    <recommendedName>
        <fullName evidence="1">Glucose-1-phosphate adenylyltransferase</fullName>
        <ecNumber evidence="1">2.7.7.27</ecNumber>
    </recommendedName>
    <alternativeName>
        <fullName evidence="1">ADP-glucose pyrophosphorylase</fullName>
        <shortName evidence="1">ADPGlc PPase</shortName>
    </alternativeName>
    <alternativeName>
        <fullName evidence="1">ADP-glucose synthase</fullName>
    </alternativeName>
</protein>
<reference key="1">
    <citation type="journal article" date="2011" name="J. Bacteriol.">
        <title>Comparative genomics of 28 Salmonella enterica isolates: evidence for CRISPR-mediated adaptive sublineage evolution.</title>
        <authorList>
            <person name="Fricke W.F."/>
            <person name="Mammel M.K."/>
            <person name="McDermott P.F."/>
            <person name="Tartera C."/>
            <person name="White D.G."/>
            <person name="Leclerc J.E."/>
            <person name="Ravel J."/>
            <person name="Cebula T.A."/>
        </authorList>
    </citation>
    <scope>NUCLEOTIDE SEQUENCE [LARGE SCALE GENOMIC DNA]</scope>
    <source>
        <strain>CVM19633</strain>
    </source>
</reference>
<evidence type="ECO:0000255" key="1">
    <source>
        <dbReference type="HAMAP-Rule" id="MF_00624"/>
    </source>
</evidence>
<sequence length="431" mass="48462">MVSLEKNDRVMLARQLPLKSVALILAGGRGTRLKDLTNKRAKPAVHFGGKFRIIDFALSNCLNSGIRRIGVITQYQSHTLVQHIQRGWSLFSEEMNEFVDLLPAQQRMKGENWYRGTADAVTQNLDIIRRYKAEYVVILAGDHIYKQDYSRMLIDHVEKGARCTVACMPVPIKEATAFGVMAVDESDKIIDFVEKPANPPAMPGDASKSLASMGIYVFDADYLYELLAADDKDDASSHDFGKDIIPKITREGMAYAHPFPLSCVQSDPQAEPYWRDVGTLEAYWKANLDLASVTPELDMYDQNWPIRTHMESLPPAKFVQDRSGSHGMTLNSLVSGGCIISGSVVVQSVLFPRVRINSFCNIDSAVLLPEVWVGRSCRLRRCVIDRACIIPEGMVIGENAEEDARRFYRSEEGIVLVTREMLRKLQVKQER</sequence>
<accession>B4TY87</accession>
<comment type="function">
    <text evidence="1">Involved in the biosynthesis of ADP-glucose, a building block required for the elongation reactions to produce glycogen. Catalyzes the reaction between ATP and alpha-D-glucose 1-phosphate (G1P) to produce pyrophosphate and ADP-Glc.</text>
</comment>
<comment type="catalytic activity">
    <reaction evidence="1">
        <text>alpha-D-glucose 1-phosphate + ATP + H(+) = ADP-alpha-D-glucose + diphosphate</text>
        <dbReference type="Rhea" id="RHEA:12120"/>
        <dbReference type="ChEBI" id="CHEBI:15378"/>
        <dbReference type="ChEBI" id="CHEBI:30616"/>
        <dbReference type="ChEBI" id="CHEBI:33019"/>
        <dbReference type="ChEBI" id="CHEBI:57498"/>
        <dbReference type="ChEBI" id="CHEBI:58601"/>
        <dbReference type="EC" id="2.7.7.27"/>
    </reaction>
</comment>
<comment type="activity regulation">
    <text evidence="1">Allosterically activated by fructose-1,6-bisphosphate (F16BP) and inhibited by AMP.</text>
</comment>
<comment type="pathway">
    <text evidence="1">Glycan biosynthesis; glycogen biosynthesis.</text>
</comment>
<comment type="subunit">
    <text evidence="1">Homotetramer.</text>
</comment>
<comment type="similarity">
    <text evidence="1">Belongs to the bacterial/plant glucose-1-phosphate adenylyltransferase family.</text>
</comment>